<evidence type="ECO:0000255" key="1">
    <source>
        <dbReference type="HAMAP-Rule" id="MF_01396"/>
    </source>
</evidence>
<sequence length="80" mass="8370">MENLNMDLLYMAAAVMMGLAAIGAAIGIGILGGKFLEGAARQPDLIPLLRTQFFVVMGLVDAIPMIAVGLGLYVMFAVAK</sequence>
<keyword id="KW-0066">ATP synthesis</keyword>
<keyword id="KW-0997">Cell inner membrane</keyword>
<keyword id="KW-1003">Cell membrane</keyword>
<keyword id="KW-0138">CF(0)</keyword>
<keyword id="KW-0375">Hydrogen ion transport</keyword>
<keyword id="KW-0406">Ion transport</keyword>
<keyword id="KW-0446">Lipid-binding</keyword>
<keyword id="KW-0472">Membrane</keyword>
<keyword id="KW-1185">Reference proteome</keyword>
<keyword id="KW-0812">Transmembrane</keyword>
<keyword id="KW-1133">Transmembrane helix</keyword>
<keyword id="KW-0813">Transport</keyword>
<reference key="1">
    <citation type="journal article" date="2008" name="Environ. Microbiol.">
        <title>The genome of Erwinia tasmaniensis strain Et1/99, a non-pathogenic bacterium in the genus Erwinia.</title>
        <authorList>
            <person name="Kube M."/>
            <person name="Migdoll A.M."/>
            <person name="Mueller I."/>
            <person name="Kuhl H."/>
            <person name="Beck A."/>
            <person name="Reinhardt R."/>
            <person name="Geider K."/>
        </authorList>
    </citation>
    <scope>NUCLEOTIDE SEQUENCE [LARGE SCALE GENOMIC DNA]</scope>
    <source>
        <strain>DSM 17950 / CFBP 7177 / CIP 109463 / NCPPB 4357 / Et1/99</strain>
    </source>
</reference>
<gene>
    <name evidence="1" type="primary">atpE</name>
    <name type="ordered locus">ETA_34800</name>
</gene>
<comment type="function">
    <text evidence="1">F(1)F(0) ATP synthase produces ATP from ADP in the presence of a proton or sodium gradient. F-type ATPases consist of two structural domains, F(1) containing the extramembraneous catalytic core and F(0) containing the membrane proton channel, linked together by a central stalk and a peripheral stalk. During catalysis, ATP synthesis in the catalytic domain of F(1) is coupled via a rotary mechanism of the central stalk subunits to proton translocation.</text>
</comment>
<comment type="function">
    <text evidence="1">Key component of the F(0) channel; it plays a direct role in translocation across the membrane. A homomeric c-ring of between 10-14 subunits forms the central stalk rotor element with the F(1) delta and epsilon subunits.</text>
</comment>
<comment type="subunit">
    <text evidence="1">F-type ATPases have 2 components, F(1) - the catalytic core - and F(0) - the membrane proton channel. F(1) has five subunits: alpha(3), beta(3), gamma(1), delta(1), epsilon(1). F(0) has three main subunits: a(1), b(2) and c(10-14). The alpha and beta chains form an alternating ring which encloses part of the gamma chain. F(1) is attached to F(0) by a central stalk formed by the gamma and epsilon chains, while a peripheral stalk is formed by the delta and b chains.</text>
</comment>
<comment type="subcellular location">
    <subcellularLocation>
        <location evidence="1">Cell inner membrane</location>
        <topology evidence="1">Multi-pass membrane protein</topology>
    </subcellularLocation>
</comment>
<comment type="similarity">
    <text evidence="1">Belongs to the ATPase C chain family.</text>
</comment>
<accession>B2VCA9</accession>
<dbReference type="EMBL" id="CU468135">
    <property type="protein sequence ID" value="CAO98526.1"/>
    <property type="molecule type" value="Genomic_DNA"/>
</dbReference>
<dbReference type="RefSeq" id="WP_012443146.1">
    <property type="nucleotide sequence ID" value="NC_010694.1"/>
</dbReference>
<dbReference type="SMR" id="B2VCA9"/>
<dbReference type="STRING" id="465817.ETA_34800"/>
<dbReference type="KEGG" id="eta:ETA_34800"/>
<dbReference type="eggNOG" id="ENOG5032S3K">
    <property type="taxonomic scope" value="Bacteria"/>
</dbReference>
<dbReference type="HOGENOM" id="CLU_148047_1_0_6"/>
<dbReference type="OrthoDB" id="9811659at2"/>
<dbReference type="Proteomes" id="UP000001726">
    <property type="component" value="Chromosome"/>
</dbReference>
<dbReference type="GO" id="GO:0005886">
    <property type="term" value="C:plasma membrane"/>
    <property type="evidence" value="ECO:0007669"/>
    <property type="project" value="UniProtKB-SubCell"/>
</dbReference>
<dbReference type="GO" id="GO:0045259">
    <property type="term" value="C:proton-transporting ATP synthase complex"/>
    <property type="evidence" value="ECO:0007669"/>
    <property type="project" value="UniProtKB-KW"/>
</dbReference>
<dbReference type="GO" id="GO:0033177">
    <property type="term" value="C:proton-transporting two-sector ATPase complex, proton-transporting domain"/>
    <property type="evidence" value="ECO:0007669"/>
    <property type="project" value="InterPro"/>
</dbReference>
<dbReference type="GO" id="GO:0008289">
    <property type="term" value="F:lipid binding"/>
    <property type="evidence" value="ECO:0007669"/>
    <property type="project" value="UniProtKB-KW"/>
</dbReference>
<dbReference type="GO" id="GO:0046933">
    <property type="term" value="F:proton-transporting ATP synthase activity, rotational mechanism"/>
    <property type="evidence" value="ECO:0007669"/>
    <property type="project" value="UniProtKB-UniRule"/>
</dbReference>
<dbReference type="CDD" id="cd18185">
    <property type="entry name" value="ATP-synt_Fo_c_ATPE"/>
    <property type="match status" value="1"/>
</dbReference>
<dbReference type="FunFam" id="1.20.20.10:FF:000002">
    <property type="entry name" value="ATP synthase subunit c"/>
    <property type="match status" value="1"/>
</dbReference>
<dbReference type="Gene3D" id="1.20.20.10">
    <property type="entry name" value="F1F0 ATP synthase subunit C"/>
    <property type="match status" value="1"/>
</dbReference>
<dbReference type="HAMAP" id="MF_01396">
    <property type="entry name" value="ATP_synth_c_bact"/>
    <property type="match status" value="1"/>
</dbReference>
<dbReference type="InterPro" id="IPR005953">
    <property type="entry name" value="ATP_synth_csu_bac/chlpt"/>
</dbReference>
<dbReference type="InterPro" id="IPR000454">
    <property type="entry name" value="ATP_synth_F0_csu"/>
</dbReference>
<dbReference type="InterPro" id="IPR020537">
    <property type="entry name" value="ATP_synth_F0_csu_DDCD_BS"/>
</dbReference>
<dbReference type="InterPro" id="IPR038662">
    <property type="entry name" value="ATP_synth_F0_csu_sf"/>
</dbReference>
<dbReference type="InterPro" id="IPR002379">
    <property type="entry name" value="ATPase_proteolipid_c-like_dom"/>
</dbReference>
<dbReference type="InterPro" id="IPR035921">
    <property type="entry name" value="F/V-ATP_Csub_sf"/>
</dbReference>
<dbReference type="NCBIfam" id="TIGR01260">
    <property type="entry name" value="ATP_synt_c"/>
    <property type="match status" value="1"/>
</dbReference>
<dbReference type="NCBIfam" id="NF005363">
    <property type="entry name" value="PRK06876.1"/>
    <property type="match status" value="1"/>
</dbReference>
<dbReference type="Pfam" id="PF00137">
    <property type="entry name" value="ATP-synt_C"/>
    <property type="match status" value="1"/>
</dbReference>
<dbReference type="PRINTS" id="PR00124">
    <property type="entry name" value="ATPASEC"/>
</dbReference>
<dbReference type="SUPFAM" id="SSF81333">
    <property type="entry name" value="F1F0 ATP synthase subunit C"/>
    <property type="match status" value="1"/>
</dbReference>
<dbReference type="PROSITE" id="PS00605">
    <property type="entry name" value="ATPASE_C"/>
    <property type="match status" value="1"/>
</dbReference>
<protein>
    <recommendedName>
        <fullName evidence="1">ATP synthase subunit c</fullName>
    </recommendedName>
    <alternativeName>
        <fullName evidence="1">ATP synthase F(0) sector subunit c</fullName>
    </alternativeName>
    <alternativeName>
        <fullName evidence="1">F-type ATPase subunit c</fullName>
        <shortName evidence="1">F-ATPase subunit c</shortName>
    </alternativeName>
    <alternativeName>
        <fullName evidence="1">Lipid-binding protein</fullName>
    </alternativeName>
</protein>
<name>ATPL_ERWT9</name>
<proteinExistence type="inferred from homology"/>
<feature type="chain" id="PRO_1000184379" description="ATP synthase subunit c">
    <location>
        <begin position="1"/>
        <end position="80"/>
    </location>
</feature>
<feature type="transmembrane region" description="Helical" evidence="1">
    <location>
        <begin position="11"/>
        <end position="31"/>
    </location>
</feature>
<feature type="transmembrane region" description="Helical" evidence="1">
    <location>
        <begin position="53"/>
        <end position="73"/>
    </location>
</feature>
<feature type="site" description="Reversibly protonated during proton transport" evidence="1">
    <location>
        <position position="61"/>
    </location>
</feature>
<organism>
    <name type="scientific">Erwinia tasmaniensis (strain DSM 17950 / CFBP 7177 / CIP 109463 / NCPPB 4357 / Et1/99)</name>
    <dbReference type="NCBI Taxonomy" id="465817"/>
    <lineage>
        <taxon>Bacteria</taxon>
        <taxon>Pseudomonadati</taxon>
        <taxon>Pseudomonadota</taxon>
        <taxon>Gammaproteobacteria</taxon>
        <taxon>Enterobacterales</taxon>
        <taxon>Erwiniaceae</taxon>
        <taxon>Erwinia</taxon>
    </lineage>
</organism>